<accession>C5A7A2</accession>
<proteinExistence type="inferred from homology"/>
<evidence type="ECO:0000255" key="1">
    <source>
        <dbReference type="HAMAP-Rule" id="MF_01013"/>
    </source>
</evidence>
<keyword id="KW-0028">Amino-acid biosynthesis</keyword>
<keyword id="KW-0963">Cytoplasm</keyword>
<keyword id="KW-0368">Histidine biosynthesis</keyword>
<keyword id="KW-0456">Lyase</keyword>
<keyword id="KW-1185">Reference proteome</keyword>
<feature type="chain" id="PRO_1000213219" description="Imidazole glycerol phosphate synthase subunit HisF">
    <location>
        <begin position="1"/>
        <end position="252"/>
    </location>
</feature>
<feature type="active site" evidence="1">
    <location>
        <position position="11"/>
    </location>
</feature>
<feature type="active site" evidence="1">
    <location>
        <position position="130"/>
    </location>
</feature>
<gene>
    <name evidence="1" type="primary">hisF</name>
    <name type="ordered locus">TGAM_1612</name>
</gene>
<protein>
    <recommendedName>
        <fullName evidence="1">Imidazole glycerol phosphate synthase subunit HisF</fullName>
        <ecNumber evidence="1">4.3.2.10</ecNumber>
    </recommendedName>
    <alternativeName>
        <fullName evidence="1">IGP synthase cyclase subunit</fullName>
    </alternativeName>
    <alternativeName>
        <fullName evidence="1">IGP synthase subunit HisF</fullName>
    </alternativeName>
    <alternativeName>
        <fullName evidence="1">ImGP synthase subunit HisF</fullName>
        <shortName evidence="1">IGPS subunit HisF</shortName>
    </alternativeName>
</protein>
<organism>
    <name type="scientific">Thermococcus gammatolerans (strain DSM 15229 / JCM 11827 / EJ3)</name>
    <dbReference type="NCBI Taxonomy" id="593117"/>
    <lineage>
        <taxon>Archaea</taxon>
        <taxon>Methanobacteriati</taxon>
        <taxon>Methanobacteriota</taxon>
        <taxon>Thermococci</taxon>
        <taxon>Thermococcales</taxon>
        <taxon>Thermococcaceae</taxon>
        <taxon>Thermococcus</taxon>
    </lineage>
</organism>
<dbReference type="EC" id="4.3.2.10" evidence="1"/>
<dbReference type="EMBL" id="CP001398">
    <property type="protein sequence ID" value="ACS34114.1"/>
    <property type="molecule type" value="Genomic_DNA"/>
</dbReference>
<dbReference type="RefSeq" id="WP_015859225.1">
    <property type="nucleotide sequence ID" value="NC_012804.1"/>
</dbReference>
<dbReference type="SMR" id="C5A7A2"/>
<dbReference type="STRING" id="593117.TGAM_1612"/>
<dbReference type="PaxDb" id="593117-TGAM_1612"/>
<dbReference type="GeneID" id="7988506"/>
<dbReference type="KEGG" id="tga:TGAM_1612"/>
<dbReference type="PATRIC" id="fig|593117.10.peg.1616"/>
<dbReference type="eggNOG" id="arCOG00617">
    <property type="taxonomic scope" value="Archaea"/>
</dbReference>
<dbReference type="HOGENOM" id="CLU_048577_4_0_2"/>
<dbReference type="OrthoDB" id="6261at2157"/>
<dbReference type="UniPathway" id="UPA00031">
    <property type="reaction ID" value="UER00010"/>
</dbReference>
<dbReference type="Proteomes" id="UP000001488">
    <property type="component" value="Chromosome"/>
</dbReference>
<dbReference type="GO" id="GO:0005737">
    <property type="term" value="C:cytoplasm"/>
    <property type="evidence" value="ECO:0007669"/>
    <property type="project" value="UniProtKB-SubCell"/>
</dbReference>
<dbReference type="GO" id="GO:0000107">
    <property type="term" value="F:imidazoleglycerol-phosphate synthase activity"/>
    <property type="evidence" value="ECO:0007669"/>
    <property type="project" value="UniProtKB-UniRule"/>
</dbReference>
<dbReference type="GO" id="GO:0016829">
    <property type="term" value="F:lyase activity"/>
    <property type="evidence" value="ECO:0007669"/>
    <property type="project" value="UniProtKB-KW"/>
</dbReference>
<dbReference type="GO" id="GO:0000105">
    <property type="term" value="P:L-histidine biosynthetic process"/>
    <property type="evidence" value="ECO:0007669"/>
    <property type="project" value="UniProtKB-UniRule"/>
</dbReference>
<dbReference type="CDD" id="cd04731">
    <property type="entry name" value="HisF"/>
    <property type="match status" value="1"/>
</dbReference>
<dbReference type="FunFam" id="3.20.20.70:FF:000006">
    <property type="entry name" value="Imidazole glycerol phosphate synthase subunit HisF"/>
    <property type="match status" value="1"/>
</dbReference>
<dbReference type="Gene3D" id="3.20.20.70">
    <property type="entry name" value="Aldolase class I"/>
    <property type="match status" value="1"/>
</dbReference>
<dbReference type="HAMAP" id="MF_01013">
    <property type="entry name" value="HisF"/>
    <property type="match status" value="1"/>
</dbReference>
<dbReference type="InterPro" id="IPR013785">
    <property type="entry name" value="Aldolase_TIM"/>
</dbReference>
<dbReference type="InterPro" id="IPR006062">
    <property type="entry name" value="His_biosynth"/>
</dbReference>
<dbReference type="InterPro" id="IPR004651">
    <property type="entry name" value="HisF"/>
</dbReference>
<dbReference type="InterPro" id="IPR050064">
    <property type="entry name" value="IGPS_HisA/HisF"/>
</dbReference>
<dbReference type="InterPro" id="IPR011060">
    <property type="entry name" value="RibuloseP-bd_barrel"/>
</dbReference>
<dbReference type="NCBIfam" id="TIGR00735">
    <property type="entry name" value="hisF"/>
    <property type="match status" value="1"/>
</dbReference>
<dbReference type="PANTHER" id="PTHR21235:SF2">
    <property type="entry name" value="IMIDAZOLE GLYCEROL PHOSPHATE SYNTHASE HISHF"/>
    <property type="match status" value="1"/>
</dbReference>
<dbReference type="PANTHER" id="PTHR21235">
    <property type="entry name" value="IMIDAZOLE GLYCEROL PHOSPHATE SYNTHASE SUBUNIT HISF/H IGP SYNTHASE SUBUNIT HISF/H"/>
    <property type="match status" value="1"/>
</dbReference>
<dbReference type="Pfam" id="PF00977">
    <property type="entry name" value="His_biosynth"/>
    <property type="match status" value="1"/>
</dbReference>
<dbReference type="SUPFAM" id="SSF51366">
    <property type="entry name" value="Ribulose-phoshate binding barrel"/>
    <property type="match status" value="1"/>
</dbReference>
<reference key="1">
    <citation type="journal article" date="2007" name="Genome Biol.">
        <title>Genome analysis and genome-wide proteomics of Thermococcus gammatolerans, the most radioresistant organism known amongst the Archaea.</title>
        <authorList>
            <person name="Zivanovic Y."/>
            <person name="Armengaud J."/>
            <person name="Lagorce A."/>
            <person name="Leplat C."/>
            <person name="Guerin P."/>
            <person name="Dutertre M."/>
            <person name="Anthouard V."/>
            <person name="Forterre P."/>
            <person name="Wincker P."/>
            <person name="Confalonieri F."/>
        </authorList>
    </citation>
    <scope>NUCLEOTIDE SEQUENCE [LARGE SCALE GENOMIC DNA]</scope>
    <source>
        <strain>DSM 15229 / JCM 11827 / EJ3</strain>
    </source>
</reference>
<name>HIS6_THEGJ</name>
<comment type="function">
    <text evidence="1">IGPS catalyzes the conversion of PRFAR and glutamine to IGP, AICAR and glutamate. The HisF subunit catalyzes the cyclization activity that produces IGP and AICAR from PRFAR using the ammonia provided by the HisH subunit.</text>
</comment>
<comment type="catalytic activity">
    <reaction evidence="1">
        <text>5-[(5-phospho-1-deoxy-D-ribulos-1-ylimino)methylamino]-1-(5-phospho-beta-D-ribosyl)imidazole-4-carboxamide + L-glutamine = D-erythro-1-(imidazol-4-yl)glycerol 3-phosphate + 5-amino-1-(5-phospho-beta-D-ribosyl)imidazole-4-carboxamide + L-glutamate + H(+)</text>
        <dbReference type="Rhea" id="RHEA:24793"/>
        <dbReference type="ChEBI" id="CHEBI:15378"/>
        <dbReference type="ChEBI" id="CHEBI:29985"/>
        <dbReference type="ChEBI" id="CHEBI:58278"/>
        <dbReference type="ChEBI" id="CHEBI:58359"/>
        <dbReference type="ChEBI" id="CHEBI:58475"/>
        <dbReference type="ChEBI" id="CHEBI:58525"/>
        <dbReference type="EC" id="4.3.2.10"/>
    </reaction>
</comment>
<comment type="pathway">
    <text evidence="1">Amino-acid biosynthesis; L-histidine biosynthesis; L-histidine from 5-phospho-alpha-D-ribose 1-diphosphate: step 5/9.</text>
</comment>
<comment type="subunit">
    <text evidence="1">Heterodimer of HisH and HisF.</text>
</comment>
<comment type="subcellular location">
    <subcellularLocation>
        <location evidence="1">Cytoplasm</location>
    </subcellularLocation>
</comment>
<comment type="similarity">
    <text evidence="1">Belongs to the HisA/HisF family.</text>
</comment>
<sequence length="252" mass="27708">MLAKRIIAALDIKEGRVVKGIKFKNIRDAGDPIELARRYEKEGIDEIVFLDITASYEKRGILLDLVERIAEEIYVPFTVGGGIRTVEEAREIIKRGADKVFINTAAVDRPELVREIAQVVGTANLVIAIDAKWNGSFWEVYTHGGRKARGIDALEWARTVERLGAGEILLTSMDTDGTKMGFDIPLTKAVAEAVDIPVIASGGAGRPEHFYEAFKAGAEAALAASIFHYGEYTVGELKEFLAERGIPVRLDY</sequence>